<reference key="1">
    <citation type="journal article" date="2001" name="J. Gen. Virol.">
        <title>The complete sequence of the Cydia pomonella granulovirus genome.</title>
        <authorList>
            <person name="Luque T."/>
            <person name="Finch R."/>
            <person name="Crook N."/>
            <person name="O'Reilly D.R."/>
            <person name="Winstanley D."/>
        </authorList>
    </citation>
    <scope>NUCLEOTIDE SEQUENCE [LARGE SCALE GENOMIC DNA]</scope>
    <source>
        <strain>Mexican 1</strain>
    </source>
</reference>
<name>GRAN_GVCPM</name>
<accession>P87577</accession>
<protein>
    <recommendedName>
        <fullName>Granulin</fullName>
    </recommendedName>
    <alternativeName>
        <fullName>Matrix protein</fullName>
    </alternativeName>
</protein>
<dbReference type="EMBL" id="U53466">
    <property type="protein sequence ID" value="AAK70668.1"/>
    <property type="molecule type" value="Genomic_DNA"/>
</dbReference>
<dbReference type="RefSeq" id="NP_148785.1">
    <property type="nucleotide sequence ID" value="NC_002816.1"/>
</dbReference>
<dbReference type="PDB" id="5G0Z">
    <property type="method" value="X-ray"/>
    <property type="resolution" value="2.00 A"/>
    <property type="chains" value="A=1-248"/>
</dbReference>
<dbReference type="PDB" id="5G3X">
    <property type="method" value="X-ray"/>
    <property type="resolution" value="1.66 A"/>
    <property type="chains" value="A=1-248"/>
</dbReference>
<dbReference type="PDB" id="5MND">
    <property type="method" value="X-ray"/>
    <property type="resolution" value="2.56 A"/>
    <property type="chains" value="A=6-248"/>
</dbReference>
<dbReference type="PDB" id="6S2O">
    <property type="method" value="EM"/>
    <property type="resolution" value="1.55 A"/>
    <property type="chains" value="A=1-248"/>
</dbReference>
<dbReference type="PDB" id="6YNG">
    <property type="method" value="EM"/>
    <property type="resolution" value="2.83 A"/>
    <property type="chains" value="A=1-248"/>
</dbReference>
<dbReference type="PDBsum" id="5G0Z"/>
<dbReference type="PDBsum" id="5G3X"/>
<dbReference type="PDBsum" id="5MND"/>
<dbReference type="PDBsum" id="6S2O"/>
<dbReference type="PDBsum" id="6YNG"/>
<dbReference type="EMDB" id="EMD-10091"/>
<dbReference type="SMR" id="P87577"/>
<dbReference type="GeneID" id="921402"/>
<dbReference type="KEGG" id="vg:921402"/>
<dbReference type="Proteomes" id="UP000009249">
    <property type="component" value="Segment"/>
</dbReference>
<dbReference type="GO" id="GO:0039679">
    <property type="term" value="C:viral occlusion body"/>
    <property type="evidence" value="ECO:0007669"/>
    <property type="project" value="UniProtKB-KW"/>
</dbReference>
<dbReference type="GO" id="GO:0005198">
    <property type="term" value="F:structural molecule activity"/>
    <property type="evidence" value="ECO:0007669"/>
    <property type="project" value="InterPro"/>
</dbReference>
<dbReference type="InterPro" id="IPR001746">
    <property type="entry name" value="Polyhedrin"/>
</dbReference>
<dbReference type="Pfam" id="PF00738">
    <property type="entry name" value="Polyhedrin"/>
    <property type="match status" value="1"/>
</dbReference>
<organismHost>
    <name type="scientific">Cydia pomonella</name>
    <name type="common">Codling moth</name>
    <dbReference type="NCBI Taxonomy" id="82600"/>
</organismHost>
<comment type="function">
    <text>Component of the virus occlusion bodies, which are large proteinaceous structures, that protect the virus from the outside environment for extended periods until they are ingested by insect larvae.</text>
</comment>
<comment type="similarity">
    <text evidence="1">Belongs to the polyhedrin family.</text>
</comment>
<feature type="chain" id="PRO_0000217264" description="Granulin">
    <location>
        <begin position="1"/>
        <end position="248"/>
    </location>
</feature>
<feature type="strand" evidence="2">
    <location>
        <begin position="16"/>
        <end position="19"/>
    </location>
</feature>
<feature type="strand" evidence="2">
    <location>
        <begin position="22"/>
        <end position="25"/>
    </location>
</feature>
<feature type="helix" evidence="2">
    <location>
        <begin position="27"/>
        <end position="53"/>
    </location>
</feature>
<feature type="turn" evidence="2">
    <location>
        <begin position="62"/>
        <end position="64"/>
    </location>
</feature>
<feature type="strand" evidence="2">
    <location>
        <begin position="65"/>
        <end position="81"/>
    </location>
</feature>
<feature type="strand" evidence="2">
    <location>
        <begin position="85"/>
        <end position="88"/>
    </location>
</feature>
<feature type="helix" evidence="2">
    <location>
        <begin position="94"/>
        <end position="109"/>
    </location>
</feature>
<feature type="strand" evidence="2">
    <location>
        <begin position="114"/>
        <end position="133"/>
    </location>
</feature>
<feature type="strand" evidence="2">
    <location>
        <begin position="138"/>
        <end position="145"/>
    </location>
</feature>
<feature type="strand" evidence="2">
    <location>
        <begin position="154"/>
        <end position="157"/>
    </location>
</feature>
<feature type="strand" evidence="2">
    <location>
        <begin position="168"/>
        <end position="174"/>
    </location>
</feature>
<feature type="turn" evidence="2">
    <location>
        <begin position="176"/>
        <end position="178"/>
    </location>
</feature>
<feature type="strand" evidence="2">
    <location>
        <begin position="185"/>
        <end position="187"/>
    </location>
</feature>
<feature type="helix" evidence="2">
    <location>
        <begin position="194"/>
        <end position="199"/>
    </location>
</feature>
<feature type="turn" evidence="2">
    <location>
        <begin position="204"/>
        <end position="206"/>
    </location>
</feature>
<feature type="strand" evidence="2">
    <location>
        <begin position="207"/>
        <end position="216"/>
    </location>
</feature>
<feature type="strand" evidence="2">
    <location>
        <begin position="221"/>
        <end position="236"/>
    </location>
</feature>
<proteinExistence type="evidence at protein level"/>
<sequence>MGYNKSLRYSRHDGTSCVIDNHHLKSLGAVLNDVRRKKDRIREAEYEPIIDIADQYMVTEDPFRGPGKNVRITLFKEIRRVHPDTMKLVCNWSGKEFLRETWTRFISEEFPITTDQEIMDLWFELQLRPMHPNRCYKFTMQYALGAHPDYVAHDVIRQQDPYYVGPNNIERINLSKKGFAFPLTCLQSVYNDNFERFFDDVLWPYFYRPLVYVGTTSAEIEEIMIEVSLLFKIKEFAPDVPLFTGPAY</sequence>
<keyword id="KW-0002">3D-structure</keyword>
<keyword id="KW-1185">Reference proteome</keyword>
<keyword id="KW-0842">Viral occlusion body</keyword>
<organism>
    <name type="scientific">Cydia pomonella granulosis virus (isolate Mexico/1963)</name>
    <name type="common">CpGV</name>
    <name type="synonym">Cydia pomonella granulovirus</name>
    <dbReference type="NCBI Taxonomy" id="654905"/>
    <lineage>
        <taxon>Viruses</taxon>
        <taxon>Viruses incertae sedis</taxon>
        <taxon>Naldaviricetes</taxon>
        <taxon>Lefavirales</taxon>
        <taxon>Baculoviridae</taxon>
        <taxon>Betabaculovirus</taxon>
        <taxon>Betabaculovirus cypomonellae</taxon>
    </lineage>
</organism>
<evidence type="ECO:0000305" key="1"/>
<evidence type="ECO:0007829" key="2">
    <source>
        <dbReference type="PDB" id="6S2O"/>
    </source>
</evidence>